<reference key="1">
    <citation type="journal article" date="2008" name="J. Bacteriol.">
        <title>Insights into plant cell wall degradation from the genome sequence of the soil bacterium Cellvibrio japonicus.</title>
        <authorList>
            <person name="DeBoy R.T."/>
            <person name="Mongodin E.F."/>
            <person name="Fouts D.E."/>
            <person name="Tailford L.E."/>
            <person name="Khouri H."/>
            <person name="Emerson J.B."/>
            <person name="Mohamoud Y."/>
            <person name="Watkins K."/>
            <person name="Henrissat B."/>
            <person name="Gilbert H.J."/>
            <person name="Nelson K.E."/>
        </authorList>
    </citation>
    <scope>NUCLEOTIDE SEQUENCE [LARGE SCALE GENOMIC DNA]</scope>
    <source>
        <strain>Ueda107</strain>
    </source>
</reference>
<accession>B3PHI3</accession>
<proteinExistence type="inferred from homology"/>
<gene>
    <name evidence="1" type="primary">mdh</name>
    <name type="ordered locus">CJA_1983</name>
</gene>
<comment type="function">
    <text evidence="1">Catalyzes the reversible oxidation of malate to oxaloacetate.</text>
</comment>
<comment type="catalytic activity">
    <reaction evidence="1">
        <text>(S)-malate + NAD(+) = oxaloacetate + NADH + H(+)</text>
        <dbReference type="Rhea" id="RHEA:21432"/>
        <dbReference type="ChEBI" id="CHEBI:15378"/>
        <dbReference type="ChEBI" id="CHEBI:15589"/>
        <dbReference type="ChEBI" id="CHEBI:16452"/>
        <dbReference type="ChEBI" id="CHEBI:57540"/>
        <dbReference type="ChEBI" id="CHEBI:57945"/>
        <dbReference type="EC" id="1.1.1.37"/>
    </reaction>
</comment>
<comment type="similarity">
    <text evidence="1">Belongs to the LDH/MDH superfamily. MDH type 2 family.</text>
</comment>
<keyword id="KW-0520">NAD</keyword>
<keyword id="KW-0560">Oxidoreductase</keyword>
<keyword id="KW-1185">Reference proteome</keyword>
<keyword id="KW-0816">Tricarboxylic acid cycle</keyword>
<feature type="chain" id="PRO_1000191615" description="Malate dehydrogenase">
    <location>
        <begin position="1"/>
        <end position="327"/>
    </location>
</feature>
<feature type="active site" description="Proton acceptor" evidence="1">
    <location>
        <position position="187"/>
    </location>
</feature>
<feature type="binding site" evidence="1">
    <location>
        <begin position="11"/>
        <end position="17"/>
    </location>
    <ligand>
        <name>NAD(+)</name>
        <dbReference type="ChEBI" id="CHEBI:57540"/>
    </ligand>
</feature>
<feature type="binding site" evidence="1">
    <location>
        <position position="92"/>
    </location>
    <ligand>
        <name>substrate</name>
    </ligand>
</feature>
<feature type="binding site" evidence="1">
    <location>
        <position position="98"/>
    </location>
    <ligand>
        <name>substrate</name>
    </ligand>
</feature>
<feature type="binding site" evidence="1">
    <location>
        <position position="105"/>
    </location>
    <ligand>
        <name>NAD(+)</name>
        <dbReference type="ChEBI" id="CHEBI:57540"/>
    </ligand>
</feature>
<feature type="binding site" evidence="1">
    <location>
        <position position="112"/>
    </location>
    <ligand>
        <name>NAD(+)</name>
        <dbReference type="ChEBI" id="CHEBI:57540"/>
    </ligand>
</feature>
<feature type="binding site" evidence="1">
    <location>
        <begin position="129"/>
        <end position="131"/>
    </location>
    <ligand>
        <name>NAD(+)</name>
        <dbReference type="ChEBI" id="CHEBI:57540"/>
    </ligand>
</feature>
<feature type="binding site" evidence="1">
    <location>
        <position position="131"/>
    </location>
    <ligand>
        <name>substrate</name>
    </ligand>
</feature>
<feature type="binding site" evidence="1">
    <location>
        <position position="162"/>
    </location>
    <ligand>
        <name>substrate</name>
    </ligand>
</feature>
<organism>
    <name type="scientific">Cellvibrio japonicus (strain Ueda107)</name>
    <name type="common">Pseudomonas fluorescens subsp. cellulosa</name>
    <dbReference type="NCBI Taxonomy" id="498211"/>
    <lineage>
        <taxon>Bacteria</taxon>
        <taxon>Pseudomonadati</taxon>
        <taxon>Pseudomonadota</taxon>
        <taxon>Gammaproteobacteria</taxon>
        <taxon>Cellvibrionales</taxon>
        <taxon>Cellvibrionaceae</taxon>
        <taxon>Cellvibrio</taxon>
    </lineage>
</organism>
<dbReference type="EC" id="1.1.1.37" evidence="1"/>
<dbReference type="EMBL" id="CP000934">
    <property type="protein sequence ID" value="ACE83216.1"/>
    <property type="molecule type" value="Genomic_DNA"/>
</dbReference>
<dbReference type="RefSeq" id="WP_012487592.1">
    <property type="nucleotide sequence ID" value="NC_010995.1"/>
</dbReference>
<dbReference type="SMR" id="B3PHI3"/>
<dbReference type="STRING" id="498211.CJA_1983"/>
<dbReference type="KEGG" id="cja:CJA_1983"/>
<dbReference type="eggNOG" id="COG0039">
    <property type="taxonomic scope" value="Bacteria"/>
</dbReference>
<dbReference type="HOGENOM" id="CLU_040727_2_0_6"/>
<dbReference type="OrthoDB" id="9802969at2"/>
<dbReference type="Proteomes" id="UP000001036">
    <property type="component" value="Chromosome"/>
</dbReference>
<dbReference type="GO" id="GO:0030060">
    <property type="term" value="F:L-malate dehydrogenase (NAD+) activity"/>
    <property type="evidence" value="ECO:0007669"/>
    <property type="project" value="UniProtKB-UniRule"/>
</dbReference>
<dbReference type="GO" id="GO:0006108">
    <property type="term" value="P:malate metabolic process"/>
    <property type="evidence" value="ECO:0007669"/>
    <property type="project" value="InterPro"/>
</dbReference>
<dbReference type="GO" id="GO:0006099">
    <property type="term" value="P:tricarboxylic acid cycle"/>
    <property type="evidence" value="ECO:0007669"/>
    <property type="project" value="UniProtKB-UniRule"/>
</dbReference>
<dbReference type="CDD" id="cd01338">
    <property type="entry name" value="MDH_chloroplast-like"/>
    <property type="match status" value="1"/>
</dbReference>
<dbReference type="FunFam" id="3.40.50.720:FF:000010">
    <property type="entry name" value="Malate dehydrogenase"/>
    <property type="match status" value="1"/>
</dbReference>
<dbReference type="FunFam" id="3.90.110.10:FF:000002">
    <property type="entry name" value="Malate dehydrogenase"/>
    <property type="match status" value="1"/>
</dbReference>
<dbReference type="Gene3D" id="3.90.110.10">
    <property type="entry name" value="Lactate dehydrogenase/glycoside hydrolase, family 4, C-terminal"/>
    <property type="match status" value="1"/>
</dbReference>
<dbReference type="Gene3D" id="3.40.50.720">
    <property type="entry name" value="NAD(P)-binding Rossmann-like Domain"/>
    <property type="match status" value="1"/>
</dbReference>
<dbReference type="HAMAP" id="MF_01517">
    <property type="entry name" value="Malate_dehydrog_2"/>
    <property type="match status" value="1"/>
</dbReference>
<dbReference type="InterPro" id="IPR001557">
    <property type="entry name" value="L-lactate/malate_DH"/>
</dbReference>
<dbReference type="InterPro" id="IPR022383">
    <property type="entry name" value="Lactate/malate_DH_C"/>
</dbReference>
<dbReference type="InterPro" id="IPR001236">
    <property type="entry name" value="Lactate/malate_DH_N"/>
</dbReference>
<dbReference type="InterPro" id="IPR015955">
    <property type="entry name" value="Lactate_DH/Glyco_Ohase_4_C"/>
</dbReference>
<dbReference type="InterPro" id="IPR001252">
    <property type="entry name" value="Malate_DH_AS"/>
</dbReference>
<dbReference type="InterPro" id="IPR010945">
    <property type="entry name" value="Malate_DH_type2"/>
</dbReference>
<dbReference type="InterPro" id="IPR036291">
    <property type="entry name" value="NAD(P)-bd_dom_sf"/>
</dbReference>
<dbReference type="NCBIfam" id="TIGR01759">
    <property type="entry name" value="MalateDH-SF1"/>
    <property type="match status" value="1"/>
</dbReference>
<dbReference type="NCBIfam" id="NF003916">
    <property type="entry name" value="PRK05442.1"/>
    <property type="match status" value="1"/>
</dbReference>
<dbReference type="PANTHER" id="PTHR23382">
    <property type="entry name" value="MALATE DEHYDROGENASE"/>
    <property type="match status" value="1"/>
</dbReference>
<dbReference type="Pfam" id="PF02866">
    <property type="entry name" value="Ldh_1_C"/>
    <property type="match status" value="1"/>
</dbReference>
<dbReference type="Pfam" id="PF00056">
    <property type="entry name" value="Ldh_1_N"/>
    <property type="match status" value="1"/>
</dbReference>
<dbReference type="PIRSF" id="PIRSF000102">
    <property type="entry name" value="Lac_mal_DH"/>
    <property type="match status" value="1"/>
</dbReference>
<dbReference type="SUPFAM" id="SSF56327">
    <property type="entry name" value="LDH C-terminal domain-like"/>
    <property type="match status" value="1"/>
</dbReference>
<dbReference type="SUPFAM" id="SSF51735">
    <property type="entry name" value="NAD(P)-binding Rossmann-fold domains"/>
    <property type="match status" value="1"/>
</dbReference>
<dbReference type="PROSITE" id="PS00068">
    <property type="entry name" value="MDH"/>
    <property type="match status" value="1"/>
</dbReference>
<name>MDH_CELJU</name>
<evidence type="ECO:0000255" key="1">
    <source>
        <dbReference type="HAMAP-Rule" id="MF_01517"/>
    </source>
</evidence>
<protein>
    <recommendedName>
        <fullName evidence="1">Malate dehydrogenase</fullName>
        <ecNumber evidence="1">1.1.1.37</ecNumber>
    </recommendedName>
</protein>
<sequence>MKAPVRVTVTGAAGQISYSLLFRIAAGDMLGKDQPVILQLLEITPALKALQGVAMELDDCAFPLLAGIVTTDDPSVAFKDSDYALLVGARPRGPGMERKDLLAANAAIFSVQGKAINDHASKNIKVLVVGNPANTNALIAQRNAPDISPRQFTAMTRLDHNRALSQLATKTGTSINNITKALIWGNHSSTQYPDLHNTLVDGKPALSLVDQAWYESDYIPTVQQRGAAIIAARGASSAASAANAAINHIRDWALGTPANDWVSMGVYSDGSYGIEKGLIYSFPCVCKNGDWEIVQGLDINEFSRAKMTATEKELQEERDAVKELLPA</sequence>